<accession>Q82WQ6</accession>
<comment type="function">
    <text evidence="1">The glycine cleavage system catalyzes the degradation of glycine.</text>
</comment>
<comment type="catalytic activity">
    <reaction evidence="1">
        <text>N(6)-[(R)-S(8)-aminomethyldihydrolipoyl]-L-lysyl-[protein] + (6S)-5,6,7,8-tetrahydrofolate = N(6)-[(R)-dihydrolipoyl]-L-lysyl-[protein] + (6R)-5,10-methylene-5,6,7,8-tetrahydrofolate + NH4(+)</text>
        <dbReference type="Rhea" id="RHEA:16945"/>
        <dbReference type="Rhea" id="RHEA-COMP:10475"/>
        <dbReference type="Rhea" id="RHEA-COMP:10492"/>
        <dbReference type="ChEBI" id="CHEBI:15636"/>
        <dbReference type="ChEBI" id="CHEBI:28938"/>
        <dbReference type="ChEBI" id="CHEBI:57453"/>
        <dbReference type="ChEBI" id="CHEBI:83100"/>
        <dbReference type="ChEBI" id="CHEBI:83143"/>
        <dbReference type="EC" id="2.1.2.10"/>
    </reaction>
</comment>
<comment type="subunit">
    <text evidence="1">The glycine cleavage system is composed of four proteins: P, T, L and H.</text>
</comment>
<comment type="similarity">
    <text evidence="1">Belongs to the GcvT family.</text>
</comment>
<feature type="chain" id="PRO_0000122577" description="Aminomethyltransferase">
    <location>
        <begin position="1"/>
        <end position="363"/>
    </location>
</feature>
<proteinExistence type="inferred from homology"/>
<dbReference type="EC" id="2.1.2.10" evidence="1"/>
<dbReference type="EMBL" id="AL954747">
    <property type="protein sequence ID" value="CAD84518.1"/>
    <property type="molecule type" value="Genomic_DNA"/>
</dbReference>
<dbReference type="RefSeq" id="WP_011111233.1">
    <property type="nucleotide sequence ID" value="NC_004757.1"/>
</dbReference>
<dbReference type="SMR" id="Q82WQ6"/>
<dbReference type="STRING" id="228410.NE0607"/>
<dbReference type="GeneID" id="87103806"/>
<dbReference type="KEGG" id="neu:NE0607"/>
<dbReference type="eggNOG" id="COG0404">
    <property type="taxonomic scope" value="Bacteria"/>
</dbReference>
<dbReference type="HOGENOM" id="CLU_007884_10_2_4"/>
<dbReference type="OrthoDB" id="9774591at2"/>
<dbReference type="PhylomeDB" id="Q82WQ6"/>
<dbReference type="Proteomes" id="UP000001416">
    <property type="component" value="Chromosome"/>
</dbReference>
<dbReference type="GO" id="GO:0005829">
    <property type="term" value="C:cytosol"/>
    <property type="evidence" value="ECO:0007669"/>
    <property type="project" value="TreeGrafter"/>
</dbReference>
<dbReference type="GO" id="GO:0005960">
    <property type="term" value="C:glycine cleavage complex"/>
    <property type="evidence" value="ECO:0007669"/>
    <property type="project" value="InterPro"/>
</dbReference>
<dbReference type="GO" id="GO:0004047">
    <property type="term" value="F:aminomethyltransferase activity"/>
    <property type="evidence" value="ECO:0007669"/>
    <property type="project" value="UniProtKB-UniRule"/>
</dbReference>
<dbReference type="GO" id="GO:0008483">
    <property type="term" value="F:transaminase activity"/>
    <property type="evidence" value="ECO:0007669"/>
    <property type="project" value="UniProtKB-KW"/>
</dbReference>
<dbReference type="GO" id="GO:0019464">
    <property type="term" value="P:glycine decarboxylation via glycine cleavage system"/>
    <property type="evidence" value="ECO:0007669"/>
    <property type="project" value="UniProtKB-UniRule"/>
</dbReference>
<dbReference type="FunFam" id="3.30.70.1400:FF:000001">
    <property type="entry name" value="Aminomethyltransferase"/>
    <property type="match status" value="1"/>
</dbReference>
<dbReference type="FunFam" id="4.10.1250.10:FF:000001">
    <property type="entry name" value="Aminomethyltransferase"/>
    <property type="match status" value="1"/>
</dbReference>
<dbReference type="Gene3D" id="2.40.30.110">
    <property type="entry name" value="Aminomethyltransferase beta-barrel domains"/>
    <property type="match status" value="1"/>
</dbReference>
<dbReference type="Gene3D" id="3.30.70.1400">
    <property type="entry name" value="Aminomethyltransferase beta-barrel domains"/>
    <property type="match status" value="1"/>
</dbReference>
<dbReference type="Gene3D" id="4.10.1250.10">
    <property type="entry name" value="Aminomethyltransferase fragment"/>
    <property type="match status" value="1"/>
</dbReference>
<dbReference type="Gene3D" id="3.30.1360.120">
    <property type="entry name" value="Probable tRNA modification gtpase trme, domain 1"/>
    <property type="match status" value="1"/>
</dbReference>
<dbReference type="HAMAP" id="MF_00259">
    <property type="entry name" value="GcvT"/>
    <property type="match status" value="1"/>
</dbReference>
<dbReference type="InterPro" id="IPR006223">
    <property type="entry name" value="GCS_T"/>
</dbReference>
<dbReference type="InterPro" id="IPR022903">
    <property type="entry name" value="GCS_T_bac"/>
</dbReference>
<dbReference type="InterPro" id="IPR013977">
    <property type="entry name" value="GCST_C"/>
</dbReference>
<dbReference type="InterPro" id="IPR006222">
    <property type="entry name" value="GCV_T_N"/>
</dbReference>
<dbReference type="InterPro" id="IPR028896">
    <property type="entry name" value="GcvT/YgfZ/DmdA"/>
</dbReference>
<dbReference type="InterPro" id="IPR029043">
    <property type="entry name" value="GcvT/YgfZ_C"/>
</dbReference>
<dbReference type="InterPro" id="IPR027266">
    <property type="entry name" value="TrmE/GcvT_dom1"/>
</dbReference>
<dbReference type="NCBIfam" id="TIGR00528">
    <property type="entry name" value="gcvT"/>
    <property type="match status" value="1"/>
</dbReference>
<dbReference type="NCBIfam" id="NF001567">
    <property type="entry name" value="PRK00389.1"/>
    <property type="match status" value="1"/>
</dbReference>
<dbReference type="PANTHER" id="PTHR43757">
    <property type="entry name" value="AMINOMETHYLTRANSFERASE"/>
    <property type="match status" value="1"/>
</dbReference>
<dbReference type="PANTHER" id="PTHR43757:SF2">
    <property type="entry name" value="AMINOMETHYLTRANSFERASE, MITOCHONDRIAL"/>
    <property type="match status" value="1"/>
</dbReference>
<dbReference type="Pfam" id="PF01571">
    <property type="entry name" value="GCV_T"/>
    <property type="match status" value="1"/>
</dbReference>
<dbReference type="Pfam" id="PF08669">
    <property type="entry name" value="GCV_T_C"/>
    <property type="match status" value="1"/>
</dbReference>
<dbReference type="PIRSF" id="PIRSF006487">
    <property type="entry name" value="GcvT"/>
    <property type="match status" value="1"/>
</dbReference>
<dbReference type="SUPFAM" id="SSF101790">
    <property type="entry name" value="Aminomethyltransferase beta-barrel domain"/>
    <property type="match status" value="1"/>
</dbReference>
<dbReference type="SUPFAM" id="SSF103025">
    <property type="entry name" value="Folate-binding domain"/>
    <property type="match status" value="1"/>
</dbReference>
<gene>
    <name evidence="1" type="primary">gcvT</name>
    <name type="ordered locus">NE0607</name>
</gene>
<sequence length="363" mass="39668">MLKTTPLNAAHRAMNAKMVDFGGWDMPLHYGSQLDEHHSVRRDAGMFDVSHMLTVDIHGENVRQFLRGLVANNVDKLTLPGKALYTCMLTPTGGIIDDLIIYFLSESWFRLVVNAGTADKDIDWITGQSRQLAPALTITPRRDLAMIAVQGPNARTKVWNVIPDSQAISENLKPFQSVMLGDYFIARTGYTGEDGFEITLPAGQAADFWQKLHAAGVAPAGLGARDTLRLEAGMNLYGQDMDETVNPLESGLAWTVDLKSERDFTGKQTLLETPVNRQLVGLVLLDKGVLRNHQKVITRQEGEAGEGEITSGGFSPTLNQSIALARIPAGIAAGEQVHVVVRDKQLAAKVVKYPFVRNGQALV</sequence>
<keyword id="KW-0032">Aminotransferase</keyword>
<keyword id="KW-1185">Reference proteome</keyword>
<keyword id="KW-0808">Transferase</keyword>
<protein>
    <recommendedName>
        <fullName evidence="1">Aminomethyltransferase</fullName>
        <ecNumber evidence="1">2.1.2.10</ecNumber>
    </recommendedName>
    <alternativeName>
        <fullName evidence="1">Glycine cleavage system T protein</fullName>
    </alternativeName>
</protein>
<name>GCST_NITEU</name>
<organism>
    <name type="scientific">Nitrosomonas europaea (strain ATCC 19718 / CIP 103999 / KCTC 2705 / NBRC 14298)</name>
    <dbReference type="NCBI Taxonomy" id="228410"/>
    <lineage>
        <taxon>Bacteria</taxon>
        <taxon>Pseudomonadati</taxon>
        <taxon>Pseudomonadota</taxon>
        <taxon>Betaproteobacteria</taxon>
        <taxon>Nitrosomonadales</taxon>
        <taxon>Nitrosomonadaceae</taxon>
        <taxon>Nitrosomonas</taxon>
    </lineage>
</organism>
<reference key="1">
    <citation type="journal article" date="2003" name="J. Bacteriol.">
        <title>Complete genome sequence of the ammonia-oxidizing bacterium and obligate chemolithoautotroph Nitrosomonas europaea.</title>
        <authorList>
            <person name="Chain P."/>
            <person name="Lamerdin J.E."/>
            <person name="Larimer F.W."/>
            <person name="Regala W."/>
            <person name="Lao V."/>
            <person name="Land M.L."/>
            <person name="Hauser L."/>
            <person name="Hooper A.B."/>
            <person name="Klotz M.G."/>
            <person name="Norton J."/>
            <person name="Sayavedra-Soto L.A."/>
            <person name="Arciero D.M."/>
            <person name="Hommes N.G."/>
            <person name="Whittaker M.M."/>
            <person name="Arp D.J."/>
        </authorList>
    </citation>
    <scope>NUCLEOTIDE SEQUENCE [LARGE SCALE GENOMIC DNA]</scope>
    <source>
        <strain>ATCC 19718 / CIP 103999 / KCTC 2705 / NBRC 14298</strain>
    </source>
</reference>
<evidence type="ECO:0000255" key="1">
    <source>
        <dbReference type="HAMAP-Rule" id="MF_00259"/>
    </source>
</evidence>